<accession>B4TJX9</accession>
<gene>
    <name evidence="1" type="primary">rsmB</name>
    <name evidence="1" type="synonym">sun</name>
    <name type="ordered locus">SeHA_C3712</name>
</gene>
<reference key="1">
    <citation type="journal article" date="2011" name="J. Bacteriol.">
        <title>Comparative genomics of 28 Salmonella enterica isolates: evidence for CRISPR-mediated adaptive sublineage evolution.</title>
        <authorList>
            <person name="Fricke W.F."/>
            <person name="Mammel M.K."/>
            <person name="McDermott P.F."/>
            <person name="Tartera C."/>
            <person name="White D.G."/>
            <person name="Leclerc J.E."/>
            <person name="Ravel J."/>
            <person name="Cebula T.A."/>
        </authorList>
    </citation>
    <scope>NUCLEOTIDE SEQUENCE [LARGE SCALE GENOMIC DNA]</scope>
    <source>
        <strain>SL476</strain>
    </source>
</reference>
<comment type="function">
    <text evidence="1">Specifically methylates the cytosine at position 967 (m5C967) of 16S rRNA.</text>
</comment>
<comment type="catalytic activity">
    <reaction evidence="1">
        <text>cytidine(967) in 16S rRNA + S-adenosyl-L-methionine = 5-methylcytidine(967) in 16S rRNA + S-adenosyl-L-homocysteine + H(+)</text>
        <dbReference type="Rhea" id="RHEA:42748"/>
        <dbReference type="Rhea" id="RHEA-COMP:10219"/>
        <dbReference type="Rhea" id="RHEA-COMP:10220"/>
        <dbReference type="ChEBI" id="CHEBI:15378"/>
        <dbReference type="ChEBI" id="CHEBI:57856"/>
        <dbReference type="ChEBI" id="CHEBI:59789"/>
        <dbReference type="ChEBI" id="CHEBI:74483"/>
        <dbReference type="ChEBI" id="CHEBI:82748"/>
        <dbReference type="EC" id="2.1.1.176"/>
    </reaction>
</comment>
<comment type="subcellular location">
    <subcellularLocation>
        <location evidence="1">Cytoplasm</location>
    </subcellularLocation>
</comment>
<comment type="similarity">
    <text evidence="1">Belongs to the class I-like SAM-binding methyltransferase superfamily. RsmB/NOP family.</text>
</comment>
<feature type="chain" id="PRO_0000366169" description="Ribosomal RNA small subunit methyltransferase B">
    <location>
        <begin position="1"/>
        <end position="429"/>
    </location>
</feature>
<feature type="region of interest" description="Disordered" evidence="2">
    <location>
        <begin position="397"/>
        <end position="419"/>
    </location>
</feature>
<feature type="compositionally biased region" description="Polar residues" evidence="2">
    <location>
        <begin position="400"/>
        <end position="412"/>
    </location>
</feature>
<feature type="active site" description="Nucleophile" evidence="1">
    <location>
        <position position="375"/>
    </location>
</feature>
<feature type="binding site" evidence="1">
    <location>
        <begin position="254"/>
        <end position="260"/>
    </location>
    <ligand>
        <name>S-adenosyl-L-methionine</name>
        <dbReference type="ChEBI" id="CHEBI:59789"/>
    </ligand>
</feature>
<feature type="binding site" evidence="1">
    <location>
        <position position="277"/>
    </location>
    <ligand>
        <name>S-adenosyl-L-methionine</name>
        <dbReference type="ChEBI" id="CHEBI:59789"/>
    </ligand>
</feature>
<feature type="binding site" evidence="1">
    <location>
        <position position="303"/>
    </location>
    <ligand>
        <name>S-adenosyl-L-methionine</name>
        <dbReference type="ChEBI" id="CHEBI:59789"/>
    </ligand>
</feature>
<feature type="binding site" evidence="1">
    <location>
        <position position="322"/>
    </location>
    <ligand>
        <name>S-adenosyl-L-methionine</name>
        <dbReference type="ChEBI" id="CHEBI:59789"/>
    </ligand>
</feature>
<sequence length="429" mass="48095">MKKQNNLRSLAAQAVEQVVEQGQSLSNVLPPLQQKVADKDKALLQELCFGVLRTLSQLEWLINKLMSRPMTGKQRTVHYLIMVGFYQLLYTRVPPHAALAETVEGAVSIKRPQLKGLINGVLRQFQRQQETLLNEFATSDARFLHPGWLVKRLQNAYPTQWQHIIEANNQRPPMWLRVNRTHHTRDGWLGLLEDAGMKGYPHPDYPDAVRLETPAPVHALPGFAEGWVTVQDASAQGCAVFLAPQNGEHILDLCAAPGGKTTHILEVAPEADVLAVDIDEQRLSRVYDNLKRLGMKATVKQGDGRYPAQWCGEQQFDRILLDAPCSATGVIRRHPDIKWLRRDRDIAELAQLQAEILDAVWPRLKPGGTLVYATCSVLPEENRDQIKTFLQRTPDAALSETGTPDQPGQQNLPGGEEGDGFFYAKLIKK</sequence>
<keyword id="KW-0963">Cytoplasm</keyword>
<keyword id="KW-0489">Methyltransferase</keyword>
<keyword id="KW-0694">RNA-binding</keyword>
<keyword id="KW-0698">rRNA processing</keyword>
<keyword id="KW-0949">S-adenosyl-L-methionine</keyword>
<keyword id="KW-0808">Transferase</keyword>
<dbReference type="EC" id="2.1.1.176" evidence="1"/>
<dbReference type="EMBL" id="CP001120">
    <property type="protein sequence ID" value="ACF66207.1"/>
    <property type="molecule type" value="Genomic_DNA"/>
</dbReference>
<dbReference type="RefSeq" id="WP_000744602.1">
    <property type="nucleotide sequence ID" value="NC_011083.1"/>
</dbReference>
<dbReference type="SMR" id="B4TJX9"/>
<dbReference type="KEGG" id="seh:SeHA_C3712"/>
<dbReference type="HOGENOM" id="CLU_005316_0_4_6"/>
<dbReference type="Proteomes" id="UP000001866">
    <property type="component" value="Chromosome"/>
</dbReference>
<dbReference type="GO" id="GO:0005829">
    <property type="term" value="C:cytosol"/>
    <property type="evidence" value="ECO:0007669"/>
    <property type="project" value="TreeGrafter"/>
</dbReference>
<dbReference type="GO" id="GO:0003723">
    <property type="term" value="F:RNA binding"/>
    <property type="evidence" value="ECO:0007669"/>
    <property type="project" value="UniProtKB-KW"/>
</dbReference>
<dbReference type="GO" id="GO:0009383">
    <property type="term" value="F:rRNA (cytosine-C5-)-methyltransferase activity"/>
    <property type="evidence" value="ECO:0007669"/>
    <property type="project" value="TreeGrafter"/>
</dbReference>
<dbReference type="GO" id="GO:0006355">
    <property type="term" value="P:regulation of DNA-templated transcription"/>
    <property type="evidence" value="ECO:0007669"/>
    <property type="project" value="InterPro"/>
</dbReference>
<dbReference type="GO" id="GO:0070475">
    <property type="term" value="P:rRNA base methylation"/>
    <property type="evidence" value="ECO:0007669"/>
    <property type="project" value="TreeGrafter"/>
</dbReference>
<dbReference type="CDD" id="cd02440">
    <property type="entry name" value="AdoMet_MTases"/>
    <property type="match status" value="1"/>
</dbReference>
<dbReference type="CDD" id="cd00620">
    <property type="entry name" value="Methyltransferase_Sun"/>
    <property type="match status" value="1"/>
</dbReference>
<dbReference type="FunFam" id="1.10.287.730:FF:000001">
    <property type="entry name" value="Ribosomal RNA small subunit methyltransferase B"/>
    <property type="match status" value="1"/>
</dbReference>
<dbReference type="FunFam" id="1.10.940.10:FF:000002">
    <property type="entry name" value="Ribosomal RNA small subunit methyltransferase B"/>
    <property type="match status" value="1"/>
</dbReference>
<dbReference type="FunFam" id="3.30.70.1170:FF:000002">
    <property type="entry name" value="Ribosomal RNA small subunit methyltransferase B"/>
    <property type="match status" value="1"/>
</dbReference>
<dbReference type="FunFam" id="3.40.50.150:FF:000022">
    <property type="entry name" value="Ribosomal RNA small subunit methyltransferase B"/>
    <property type="match status" value="1"/>
</dbReference>
<dbReference type="Gene3D" id="1.10.287.730">
    <property type="entry name" value="Helix hairpin bin"/>
    <property type="match status" value="1"/>
</dbReference>
<dbReference type="Gene3D" id="1.10.940.10">
    <property type="entry name" value="NusB-like"/>
    <property type="match status" value="1"/>
</dbReference>
<dbReference type="Gene3D" id="3.30.70.1170">
    <property type="entry name" value="Sun protein, domain 3"/>
    <property type="match status" value="1"/>
</dbReference>
<dbReference type="Gene3D" id="3.40.50.150">
    <property type="entry name" value="Vaccinia Virus protein VP39"/>
    <property type="match status" value="1"/>
</dbReference>
<dbReference type="HAMAP" id="MF_01856">
    <property type="entry name" value="16SrRNA_methyltr_B"/>
    <property type="match status" value="1"/>
</dbReference>
<dbReference type="InterPro" id="IPR049560">
    <property type="entry name" value="MeTrfase_RsmB-F_NOP2_cat"/>
</dbReference>
<dbReference type="InterPro" id="IPR001678">
    <property type="entry name" value="MeTrfase_RsmB-F_NOP2_dom"/>
</dbReference>
<dbReference type="InterPro" id="IPR035926">
    <property type="entry name" value="NusB-like_sf"/>
</dbReference>
<dbReference type="InterPro" id="IPR006027">
    <property type="entry name" value="NusB_RsmB_TIM44"/>
</dbReference>
<dbReference type="InterPro" id="IPR023267">
    <property type="entry name" value="RCMT"/>
</dbReference>
<dbReference type="InterPro" id="IPR004573">
    <property type="entry name" value="rRNA_ssu_MeTfrase_B"/>
</dbReference>
<dbReference type="InterPro" id="IPR023541">
    <property type="entry name" value="rRNA_ssu_MeTfrase_B_ent"/>
</dbReference>
<dbReference type="InterPro" id="IPR054728">
    <property type="entry name" value="RsmB-like_ferredoxin"/>
</dbReference>
<dbReference type="InterPro" id="IPR048019">
    <property type="entry name" value="RsmB-like_N"/>
</dbReference>
<dbReference type="InterPro" id="IPR018314">
    <property type="entry name" value="RsmB/NOL1/NOP2-like_CS"/>
</dbReference>
<dbReference type="InterPro" id="IPR029063">
    <property type="entry name" value="SAM-dependent_MTases_sf"/>
</dbReference>
<dbReference type="NCBIfam" id="NF008149">
    <property type="entry name" value="PRK10901.1"/>
    <property type="match status" value="1"/>
</dbReference>
<dbReference type="NCBIfam" id="NF011494">
    <property type="entry name" value="PRK14902.1"/>
    <property type="match status" value="1"/>
</dbReference>
<dbReference type="NCBIfam" id="TIGR00563">
    <property type="entry name" value="rsmB"/>
    <property type="match status" value="1"/>
</dbReference>
<dbReference type="PANTHER" id="PTHR22807:SF61">
    <property type="entry name" value="NOL1_NOP2_SUN FAMILY PROTEIN _ ANTITERMINATION NUSB DOMAIN-CONTAINING PROTEIN"/>
    <property type="match status" value="1"/>
</dbReference>
<dbReference type="PANTHER" id="PTHR22807">
    <property type="entry name" value="NOP2 YEAST -RELATED NOL1/NOP2/FMU SUN DOMAIN-CONTAINING"/>
    <property type="match status" value="1"/>
</dbReference>
<dbReference type="Pfam" id="PF01189">
    <property type="entry name" value="Methyltr_RsmB-F"/>
    <property type="match status" value="1"/>
</dbReference>
<dbReference type="Pfam" id="PF01029">
    <property type="entry name" value="NusB"/>
    <property type="match status" value="1"/>
</dbReference>
<dbReference type="Pfam" id="PF22458">
    <property type="entry name" value="RsmF-B_ferredox"/>
    <property type="match status" value="1"/>
</dbReference>
<dbReference type="PRINTS" id="PR02008">
    <property type="entry name" value="RCMTFAMILY"/>
</dbReference>
<dbReference type="SUPFAM" id="SSF48013">
    <property type="entry name" value="NusB-like"/>
    <property type="match status" value="1"/>
</dbReference>
<dbReference type="SUPFAM" id="SSF53335">
    <property type="entry name" value="S-adenosyl-L-methionine-dependent methyltransferases"/>
    <property type="match status" value="1"/>
</dbReference>
<dbReference type="PROSITE" id="PS01153">
    <property type="entry name" value="NOL1_NOP2_SUN"/>
    <property type="match status" value="1"/>
</dbReference>
<dbReference type="PROSITE" id="PS51686">
    <property type="entry name" value="SAM_MT_RSMB_NOP"/>
    <property type="match status" value="1"/>
</dbReference>
<name>RSMB_SALHS</name>
<protein>
    <recommendedName>
        <fullName evidence="1">Ribosomal RNA small subunit methyltransferase B</fullName>
        <ecNumber evidence="1">2.1.1.176</ecNumber>
    </recommendedName>
    <alternativeName>
        <fullName evidence="1">16S rRNA m5C967 methyltransferase</fullName>
    </alternativeName>
    <alternativeName>
        <fullName evidence="1">rRNA (cytosine-C(5)-)-methyltransferase RsmB</fullName>
    </alternativeName>
</protein>
<organism>
    <name type="scientific">Salmonella heidelberg (strain SL476)</name>
    <dbReference type="NCBI Taxonomy" id="454169"/>
    <lineage>
        <taxon>Bacteria</taxon>
        <taxon>Pseudomonadati</taxon>
        <taxon>Pseudomonadota</taxon>
        <taxon>Gammaproteobacteria</taxon>
        <taxon>Enterobacterales</taxon>
        <taxon>Enterobacteriaceae</taxon>
        <taxon>Salmonella</taxon>
    </lineage>
</organism>
<proteinExistence type="inferred from homology"/>
<evidence type="ECO:0000255" key="1">
    <source>
        <dbReference type="HAMAP-Rule" id="MF_01856"/>
    </source>
</evidence>
<evidence type="ECO:0000256" key="2">
    <source>
        <dbReference type="SAM" id="MobiDB-lite"/>
    </source>
</evidence>